<name>RLMN_KORVE</name>
<keyword id="KW-0004">4Fe-4S</keyword>
<keyword id="KW-0963">Cytoplasm</keyword>
<keyword id="KW-1015">Disulfide bond</keyword>
<keyword id="KW-0408">Iron</keyword>
<keyword id="KW-0411">Iron-sulfur</keyword>
<keyword id="KW-0479">Metal-binding</keyword>
<keyword id="KW-0489">Methyltransferase</keyword>
<keyword id="KW-1185">Reference proteome</keyword>
<keyword id="KW-0698">rRNA processing</keyword>
<keyword id="KW-0949">S-adenosyl-L-methionine</keyword>
<keyword id="KW-0808">Transferase</keyword>
<keyword id="KW-0819">tRNA processing</keyword>
<proteinExistence type="inferred from homology"/>
<reference key="1">
    <citation type="journal article" date="2009" name="Appl. Environ. Microbiol.">
        <title>Three genomes from the phylum Acidobacteria provide insight into the lifestyles of these microorganisms in soils.</title>
        <authorList>
            <person name="Ward N.L."/>
            <person name="Challacombe J.F."/>
            <person name="Janssen P.H."/>
            <person name="Henrissat B."/>
            <person name="Coutinho P.M."/>
            <person name="Wu M."/>
            <person name="Xie G."/>
            <person name="Haft D.H."/>
            <person name="Sait M."/>
            <person name="Badger J."/>
            <person name="Barabote R.D."/>
            <person name="Bradley B."/>
            <person name="Brettin T.S."/>
            <person name="Brinkac L.M."/>
            <person name="Bruce D."/>
            <person name="Creasy T."/>
            <person name="Daugherty S.C."/>
            <person name="Davidsen T.M."/>
            <person name="DeBoy R.T."/>
            <person name="Detter J.C."/>
            <person name="Dodson R.J."/>
            <person name="Durkin A.S."/>
            <person name="Ganapathy A."/>
            <person name="Gwinn-Giglio M."/>
            <person name="Han C.S."/>
            <person name="Khouri H."/>
            <person name="Kiss H."/>
            <person name="Kothari S.P."/>
            <person name="Madupu R."/>
            <person name="Nelson K.E."/>
            <person name="Nelson W.C."/>
            <person name="Paulsen I."/>
            <person name="Penn K."/>
            <person name="Ren Q."/>
            <person name="Rosovitz M.J."/>
            <person name="Selengut J.D."/>
            <person name="Shrivastava S."/>
            <person name="Sullivan S.A."/>
            <person name="Tapia R."/>
            <person name="Thompson L.S."/>
            <person name="Watkins K.L."/>
            <person name="Yang Q."/>
            <person name="Yu C."/>
            <person name="Zafar N."/>
            <person name="Zhou L."/>
            <person name="Kuske C.R."/>
        </authorList>
    </citation>
    <scope>NUCLEOTIDE SEQUENCE [LARGE SCALE GENOMIC DNA]</scope>
    <source>
        <strain>Ellin345</strain>
    </source>
</reference>
<comment type="function">
    <text evidence="1">Specifically methylates position 2 of adenine 2503 in 23S rRNA and position 2 of adenine 37 in tRNAs.</text>
</comment>
<comment type="catalytic activity">
    <reaction evidence="1">
        <text>adenosine(2503) in 23S rRNA + 2 reduced [2Fe-2S]-[ferredoxin] + 2 S-adenosyl-L-methionine = 2-methyladenosine(2503) in 23S rRNA + 5'-deoxyadenosine + L-methionine + 2 oxidized [2Fe-2S]-[ferredoxin] + S-adenosyl-L-homocysteine</text>
        <dbReference type="Rhea" id="RHEA:42916"/>
        <dbReference type="Rhea" id="RHEA-COMP:10000"/>
        <dbReference type="Rhea" id="RHEA-COMP:10001"/>
        <dbReference type="Rhea" id="RHEA-COMP:10152"/>
        <dbReference type="Rhea" id="RHEA-COMP:10282"/>
        <dbReference type="ChEBI" id="CHEBI:17319"/>
        <dbReference type="ChEBI" id="CHEBI:33737"/>
        <dbReference type="ChEBI" id="CHEBI:33738"/>
        <dbReference type="ChEBI" id="CHEBI:57844"/>
        <dbReference type="ChEBI" id="CHEBI:57856"/>
        <dbReference type="ChEBI" id="CHEBI:59789"/>
        <dbReference type="ChEBI" id="CHEBI:74411"/>
        <dbReference type="ChEBI" id="CHEBI:74497"/>
        <dbReference type="EC" id="2.1.1.192"/>
    </reaction>
</comment>
<comment type="catalytic activity">
    <reaction evidence="1">
        <text>adenosine(37) in tRNA + 2 reduced [2Fe-2S]-[ferredoxin] + 2 S-adenosyl-L-methionine = 2-methyladenosine(37) in tRNA + 5'-deoxyadenosine + L-methionine + 2 oxidized [2Fe-2S]-[ferredoxin] + S-adenosyl-L-homocysteine</text>
        <dbReference type="Rhea" id="RHEA:43332"/>
        <dbReference type="Rhea" id="RHEA-COMP:10000"/>
        <dbReference type="Rhea" id="RHEA-COMP:10001"/>
        <dbReference type="Rhea" id="RHEA-COMP:10162"/>
        <dbReference type="Rhea" id="RHEA-COMP:10485"/>
        <dbReference type="ChEBI" id="CHEBI:17319"/>
        <dbReference type="ChEBI" id="CHEBI:33737"/>
        <dbReference type="ChEBI" id="CHEBI:33738"/>
        <dbReference type="ChEBI" id="CHEBI:57844"/>
        <dbReference type="ChEBI" id="CHEBI:57856"/>
        <dbReference type="ChEBI" id="CHEBI:59789"/>
        <dbReference type="ChEBI" id="CHEBI:74411"/>
        <dbReference type="ChEBI" id="CHEBI:74497"/>
        <dbReference type="EC" id="2.1.1.192"/>
    </reaction>
</comment>
<comment type="cofactor">
    <cofactor evidence="1">
        <name>[4Fe-4S] cluster</name>
        <dbReference type="ChEBI" id="CHEBI:49883"/>
    </cofactor>
    <text evidence="1">Binds 1 [4Fe-4S] cluster. The cluster is coordinated with 3 cysteines and an exchangeable S-adenosyl-L-methionine.</text>
</comment>
<comment type="subcellular location">
    <subcellularLocation>
        <location evidence="1">Cytoplasm</location>
    </subcellularLocation>
</comment>
<comment type="miscellaneous">
    <text evidence="1">Reaction proceeds by a ping-pong mechanism involving intermediate methylation of a conserved cysteine residue.</text>
</comment>
<comment type="similarity">
    <text evidence="1">Belongs to the radical SAM superfamily. RlmN family.</text>
</comment>
<accession>Q1IRD1</accession>
<organism>
    <name type="scientific">Koribacter versatilis (strain Ellin345)</name>
    <dbReference type="NCBI Taxonomy" id="204669"/>
    <lineage>
        <taxon>Bacteria</taxon>
        <taxon>Pseudomonadati</taxon>
        <taxon>Acidobacteriota</taxon>
        <taxon>Terriglobia</taxon>
        <taxon>Terriglobales</taxon>
        <taxon>Candidatus Korobacteraceae</taxon>
        <taxon>Candidatus Korobacter</taxon>
    </lineage>
</organism>
<gene>
    <name evidence="1" type="primary">rlmN</name>
    <name type="ordered locus">Acid345_1567</name>
</gene>
<evidence type="ECO:0000255" key="1">
    <source>
        <dbReference type="HAMAP-Rule" id="MF_01849"/>
    </source>
</evidence>
<evidence type="ECO:0000255" key="2">
    <source>
        <dbReference type="PROSITE-ProRule" id="PRU01266"/>
    </source>
</evidence>
<protein>
    <recommendedName>
        <fullName evidence="1">Probable dual-specificity RNA methyltransferase RlmN</fullName>
        <ecNumber evidence="1">2.1.1.192</ecNumber>
    </recommendedName>
    <alternativeName>
        <fullName evidence="1">23S rRNA (adenine(2503)-C(2))-methyltransferase</fullName>
    </alternativeName>
    <alternativeName>
        <fullName evidence="1">23S rRNA m2A2503 methyltransferase</fullName>
    </alternativeName>
    <alternativeName>
        <fullName evidence="1">Ribosomal RNA large subunit methyltransferase N</fullName>
    </alternativeName>
    <alternativeName>
        <fullName evidence="1">tRNA (adenine(37)-C(2))-methyltransferase</fullName>
    </alternativeName>
    <alternativeName>
        <fullName evidence="1">tRNA m2A37 methyltransferase</fullName>
    </alternativeName>
</protein>
<sequence length="346" mass="38541">MERLGQPAYRSRQLWQGLYRDRIASLDQFTTLPIPLREELKSSGWAIAFPFVQKRFTSTDGTVRYLLQFSDGQSVETVWMPEGDGGEQGDGSEDGPSYDRATICVSSQVGCAVDCQFCMTALLGLLRNLSAGEIVGQILAVLKDENVDVEKSRINLVFMGQGEPFLNFDNFVKAVTLLAEAVGIPESRMTVSTSGIVPRIVDFGQLAIRPKLAISLNASNDESRRELMPITKKWTLEKLMSAAREFPLRNRERMTFEYVLLGGVNDSEQNAREVVQLLRGLRAKVNLIAWNPGPEIPFSTPDPQHVEAFQQILIDAGIPTFIRKPRGRDIFAACGQLKRTELVTLS</sequence>
<feature type="chain" id="PRO_0000349993" description="Probable dual-specificity RNA methyltransferase RlmN">
    <location>
        <begin position="1"/>
        <end position="346"/>
    </location>
</feature>
<feature type="domain" description="Radical SAM core" evidence="2">
    <location>
        <begin position="97"/>
        <end position="329"/>
    </location>
</feature>
<feature type="active site" description="Proton acceptor" evidence="1">
    <location>
        <position position="76"/>
    </location>
</feature>
<feature type="active site" description="S-methylcysteine intermediate" evidence="1">
    <location>
        <position position="334"/>
    </location>
</feature>
<feature type="binding site" evidence="1">
    <location>
        <position position="111"/>
    </location>
    <ligand>
        <name>[4Fe-4S] cluster</name>
        <dbReference type="ChEBI" id="CHEBI:49883"/>
        <note>4Fe-4S-S-AdoMet</note>
    </ligand>
</feature>
<feature type="binding site" evidence="1">
    <location>
        <position position="115"/>
    </location>
    <ligand>
        <name>[4Fe-4S] cluster</name>
        <dbReference type="ChEBI" id="CHEBI:49883"/>
        <note>4Fe-4S-S-AdoMet</note>
    </ligand>
</feature>
<feature type="binding site" evidence="1">
    <location>
        <position position="118"/>
    </location>
    <ligand>
        <name>[4Fe-4S] cluster</name>
        <dbReference type="ChEBI" id="CHEBI:49883"/>
        <note>4Fe-4S-S-AdoMet</note>
    </ligand>
</feature>
<feature type="binding site" evidence="1">
    <location>
        <begin position="162"/>
        <end position="163"/>
    </location>
    <ligand>
        <name>S-adenosyl-L-methionine</name>
        <dbReference type="ChEBI" id="CHEBI:59789"/>
    </ligand>
</feature>
<feature type="binding site" evidence="1">
    <location>
        <position position="192"/>
    </location>
    <ligand>
        <name>S-adenosyl-L-methionine</name>
        <dbReference type="ChEBI" id="CHEBI:59789"/>
    </ligand>
</feature>
<feature type="binding site" evidence="1">
    <location>
        <begin position="215"/>
        <end position="217"/>
    </location>
    <ligand>
        <name>S-adenosyl-L-methionine</name>
        <dbReference type="ChEBI" id="CHEBI:59789"/>
    </ligand>
</feature>
<feature type="binding site" evidence="1">
    <location>
        <position position="291"/>
    </location>
    <ligand>
        <name>S-adenosyl-L-methionine</name>
        <dbReference type="ChEBI" id="CHEBI:59789"/>
    </ligand>
</feature>
<feature type="disulfide bond" description="(transient)" evidence="1">
    <location>
        <begin position="104"/>
        <end position="334"/>
    </location>
</feature>
<dbReference type="EC" id="2.1.1.192" evidence="1"/>
<dbReference type="EMBL" id="CP000360">
    <property type="protein sequence ID" value="ABF40569.1"/>
    <property type="molecule type" value="Genomic_DNA"/>
</dbReference>
<dbReference type="SMR" id="Q1IRD1"/>
<dbReference type="STRING" id="204669.Acid345_1567"/>
<dbReference type="EnsemblBacteria" id="ABF40569">
    <property type="protein sequence ID" value="ABF40569"/>
    <property type="gene ID" value="Acid345_1567"/>
</dbReference>
<dbReference type="KEGG" id="aba:Acid345_1567"/>
<dbReference type="eggNOG" id="COG0820">
    <property type="taxonomic scope" value="Bacteria"/>
</dbReference>
<dbReference type="HOGENOM" id="CLU_029101_2_0_0"/>
<dbReference type="Proteomes" id="UP000002432">
    <property type="component" value="Chromosome"/>
</dbReference>
<dbReference type="GO" id="GO:0005737">
    <property type="term" value="C:cytoplasm"/>
    <property type="evidence" value="ECO:0007669"/>
    <property type="project" value="UniProtKB-SubCell"/>
</dbReference>
<dbReference type="GO" id="GO:0051539">
    <property type="term" value="F:4 iron, 4 sulfur cluster binding"/>
    <property type="evidence" value="ECO:0007669"/>
    <property type="project" value="UniProtKB-UniRule"/>
</dbReference>
<dbReference type="GO" id="GO:0046872">
    <property type="term" value="F:metal ion binding"/>
    <property type="evidence" value="ECO:0007669"/>
    <property type="project" value="UniProtKB-KW"/>
</dbReference>
<dbReference type="GO" id="GO:0070040">
    <property type="term" value="F:rRNA (adenine(2503)-C2-)-methyltransferase activity"/>
    <property type="evidence" value="ECO:0007669"/>
    <property type="project" value="UniProtKB-UniRule"/>
</dbReference>
<dbReference type="GO" id="GO:0019843">
    <property type="term" value="F:rRNA binding"/>
    <property type="evidence" value="ECO:0007669"/>
    <property type="project" value="UniProtKB-UniRule"/>
</dbReference>
<dbReference type="GO" id="GO:0002935">
    <property type="term" value="F:tRNA (adenine(37)-C2)-methyltransferase activity"/>
    <property type="evidence" value="ECO:0007669"/>
    <property type="project" value="UniProtKB-UniRule"/>
</dbReference>
<dbReference type="GO" id="GO:0000049">
    <property type="term" value="F:tRNA binding"/>
    <property type="evidence" value="ECO:0007669"/>
    <property type="project" value="UniProtKB-UniRule"/>
</dbReference>
<dbReference type="GO" id="GO:0070475">
    <property type="term" value="P:rRNA base methylation"/>
    <property type="evidence" value="ECO:0007669"/>
    <property type="project" value="UniProtKB-UniRule"/>
</dbReference>
<dbReference type="GO" id="GO:0030488">
    <property type="term" value="P:tRNA methylation"/>
    <property type="evidence" value="ECO:0007669"/>
    <property type="project" value="UniProtKB-UniRule"/>
</dbReference>
<dbReference type="CDD" id="cd01335">
    <property type="entry name" value="Radical_SAM"/>
    <property type="match status" value="1"/>
</dbReference>
<dbReference type="Gene3D" id="1.10.150.530">
    <property type="match status" value="1"/>
</dbReference>
<dbReference type="Gene3D" id="3.20.20.70">
    <property type="entry name" value="Aldolase class I"/>
    <property type="match status" value="1"/>
</dbReference>
<dbReference type="HAMAP" id="MF_01849">
    <property type="entry name" value="RNA_methyltr_RlmN"/>
    <property type="match status" value="1"/>
</dbReference>
<dbReference type="InterPro" id="IPR013785">
    <property type="entry name" value="Aldolase_TIM"/>
</dbReference>
<dbReference type="InterPro" id="IPR040072">
    <property type="entry name" value="Methyltransferase_A"/>
</dbReference>
<dbReference type="InterPro" id="IPR027492">
    <property type="entry name" value="RNA_MTrfase_RlmN"/>
</dbReference>
<dbReference type="InterPro" id="IPR004383">
    <property type="entry name" value="rRNA_lsu_MTrfase_RlmN/Cfr"/>
</dbReference>
<dbReference type="InterPro" id="IPR007197">
    <property type="entry name" value="rSAM"/>
</dbReference>
<dbReference type="NCBIfam" id="TIGR00048">
    <property type="entry name" value="rRNA_mod_RlmN"/>
    <property type="match status" value="1"/>
</dbReference>
<dbReference type="PANTHER" id="PTHR30544">
    <property type="entry name" value="23S RRNA METHYLTRANSFERASE"/>
    <property type="match status" value="1"/>
</dbReference>
<dbReference type="PANTHER" id="PTHR30544:SF5">
    <property type="entry name" value="RADICAL SAM CORE DOMAIN-CONTAINING PROTEIN"/>
    <property type="match status" value="1"/>
</dbReference>
<dbReference type="Pfam" id="PF04055">
    <property type="entry name" value="Radical_SAM"/>
    <property type="match status" value="1"/>
</dbReference>
<dbReference type="PIRSF" id="PIRSF006004">
    <property type="entry name" value="CHP00048"/>
    <property type="match status" value="1"/>
</dbReference>
<dbReference type="SFLD" id="SFLDF00275">
    <property type="entry name" value="adenosine_C2_methyltransferase"/>
    <property type="match status" value="1"/>
</dbReference>
<dbReference type="SFLD" id="SFLDG01062">
    <property type="entry name" value="methyltransferase_(Class_A)"/>
    <property type="match status" value="1"/>
</dbReference>
<dbReference type="SUPFAM" id="SSF102114">
    <property type="entry name" value="Radical SAM enzymes"/>
    <property type="match status" value="1"/>
</dbReference>
<dbReference type="PROSITE" id="PS51918">
    <property type="entry name" value="RADICAL_SAM"/>
    <property type="match status" value="1"/>
</dbReference>